<reference key="1">
    <citation type="journal article" date="2004" name="Genome Res.">
        <title>The status, quality, and expansion of the NIH full-length cDNA project: the Mammalian Gene Collection (MGC).</title>
        <authorList>
            <consortium name="The MGC Project Team"/>
        </authorList>
    </citation>
    <scope>NUCLEOTIDE SEQUENCE [LARGE SCALE MRNA]</scope>
    <source>
        <tissue>Lung</tissue>
    </source>
</reference>
<sequence length="535" mass="60899">MVKKVAVIGAGVSGLISLKGCVDEGLEPTCFERTEDIGGLWRFKENVEDGRASIYHSVITNTSKEMSCFSDFPMPEDFPNFLHNSKLLEYFRIFAKKFDLLKYIQFQTTVISVKKRPDFASSGQWDVYVQSNGKEQRAVFDAVMVCSGHHIQPHLPLKSFPGIERFQGQYFHSRQYKHPVGYEGKRILVVGIGNSAADIASELSKRAAQVFVSTRHGSWVLSRISEDGYPWDMVFHTRFSSMLRNVLPRTVVKWMMERQMNRWFNHENYGLVPQNKYLMKEPVLNDDLPSRLLYGAIKVKTRVKELTETAVVFEDGTVEEDVDVIVFATGYTFSFPFLEDSLVKVEDNKVSLYKAMFPPHLEKPTLACIGLIQPLGSIFPTVELQARWATRVFKGVCRLPSETTMMADIAERNEKRIDLFGKSQSQILQTNYIDYLDELALEIGAKPDFISLLFKDPKLAVKLYFGPCNSYQYRLVGPGQWEGARNAILTQKQRILKPLKTRTLQTSASAPVSFLIKVLGLLAIVLAFFFKLHGF</sequence>
<protein>
    <recommendedName>
        <fullName evidence="6">Dimethylaniline monooxygenase [N-oxide-forming] 2</fullName>
        <ecNumber evidence="3">1.14.13.-</ecNumber>
    </recommendedName>
    <alternativeName>
        <fullName>Dimethylaniline oxidase 2</fullName>
    </alternativeName>
    <alternativeName>
        <fullName>Pulmonary flavin-containing monooxygenase 2</fullName>
        <shortName>FMO 2</shortName>
    </alternativeName>
</protein>
<comment type="function">
    <text evidence="3">Catalyzes the oxidative metabolism of numerous xenobiotics, including mainly therapeutic drugs and insecticides that contain a soft nucleophile, most commonly nitrogen and sulfur and participates to their bioactivation.</text>
</comment>
<comment type="cofactor">
    <cofactor evidence="1">
        <name>FAD</name>
        <dbReference type="ChEBI" id="CHEBI:57692"/>
    </cofactor>
</comment>
<comment type="cofactor">
    <cofactor evidence="1">
        <name>Mg(2+)</name>
        <dbReference type="ChEBI" id="CHEBI:18420"/>
    </cofactor>
</comment>
<comment type="subcellular location">
    <subcellularLocation>
        <location evidence="2">Microsome membrane</location>
        <topology evidence="2">Single-pass membrane protein</topology>
    </subcellularLocation>
    <subcellularLocation>
        <location evidence="2">Endoplasmic reticulum membrane</location>
        <topology evidence="2">Single-pass membrane protein</topology>
    </subcellularLocation>
</comment>
<comment type="similarity">
    <text evidence="6">Belongs to the FMO family.</text>
</comment>
<organism>
    <name type="scientific">Rattus norvegicus</name>
    <name type="common">Rat</name>
    <dbReference type="NCBI Taxonomy" id="10116"/>
    <lineage>
        <taxon>Eukaryota</taxon>
        <taxon>Metazoa</taxon>
        <taxon>Chordata</taxon>
        <taxon>Craniata</taxon>
        <taxon>Vertebrata</taxon>
        <taxon>Euteleostomi</taxon>
        <taxon>Mammalia</taxon>
        <taxon>Eutheria</taxon>
        <taxon>Euarchontoglires</taxon>
        <taxon>Glires</taxon>
        <taxon>Rodentia</taxon>
        <taxon>Myomorpha</taxon>
        <taxon>Muroidea</taxon>
        <taxon>Muridae</taxon>
        <taxon>Murinae</taxon>
        <taxon>Rattus</taxon>
    </lineage>
</organism>
<accession>Q6IRI9</accession>
<feature type="chain" id="PRO_0000147651" description="Dimethylaniline monooxygenase [N-oxide-forming] 2">
    <location>
        <begin position="1"/>
        <end position="535"/>
    </location>
</feature>
<feature type="transmembrane region" description="Helical" evidence="5">
    <location>
        <begin position="510"/>
        <end position="530"/>
    </location>
</feature>
<feature type="binding site" evidence="4">
    <location>
        <begin position="9"/>
        <end position="13"/>
    </location>
    <ligand>
        <name>FAD</name>
        <dbReference type="ChEBI" id="CHEBI:57692"/>
    </ligand>
</feature>
<feature type="binding site" evidence="4">
    <location>
        <position position="32"/>
    </location>
    <ligand>
        <name>FAD</name>
        <dbReference type="ChEBI" id="CHEBI:57692"/>
    </ligand>
</feature>
<feature type="binding site" evidence="4">
    <location>
        <begin position="40"/>
        <end position="41"/>
    </location>
    <ligand>
        <name>FAD</name>
        <dbReference type="ChEBI" id="CHEBI:57692"/>
    </ligand>
</feature>
<feature type="binding site" evidence="4">
    <location>
        <begin position="60"/>
        <end position="61"/>
    </location>
    <ligand>
        <name>NADP(+)</name>
        <dbReference type="ChEBI" id="CHEBI:58349"/>
    </ligand>
</feature>
<feature type="binding site" evidence="4">
    <location>
        <begin position="61"/>
        <end position="62"/>
    </location>
    <ligand>
        <name>FAD</name>
        <dbReference type="ChEBI" id="CHEBI:57692"/>
    </ligand>
</feature>
<feature type="binding site" evidence="4">
    <location>
        <begin position="195"/>
        <end position="198"/>
    </location>
    <ligand>
        <name>NADP(+)</name>
        <dbReference type="ChEBI" id="CHEBI:58349"/>
    </ligand>
</feature>
<feature type="cross-link" description="Glycyl lysine isopeptide (Lys-Gly) (interchain with G-Cter in SUMO)" evidence="3">
    <location>
        <position position="492"/>
    </location>
</feature>
<gene>
    <name evidence="7" type="primary">Fmo2</name>
</gene>
<name>FMO2_RAT</name>
<evidence type="ECO:0000250" key="1"/>
<evidence type="ECO:0000250" key="2">
    <source>
        <dbReference type="UniProtKB" id="P17635"/>
    </source>
</evidence>
<evidence type="ECO:0000250" key="3">
    <source>
        <dbReference type="UniProtKB" id="Q99518"/>
    </source>
</evidence>
<evidence type="ECO:0000250" key="4">
    <source>
        <dbReference type="UniProtKB" id="Q9HFE4"/>
    </source>
</evidence>
<evidence type="ECO:0000255" key="5"/>
<evidence type="ECO:0000305" key="6"/>
<evidence type="ECO:0000312" key="7">
    <source>
        <dbReference type="RGD" id="628600"/>
    </source>
</evidence>
<proteinExistence type="evidence at transcript level"/>
<keyword id="KW-0256">Endoplasmic reticulum</keyword>
<keyword id="KW-0274">FAD</keyword>
<keyword id="KW-0285">Flavoprotein</keyword>
<keyword id="KW-1017">Isopeptide bond</keyword>
<keyword id="KW-0460">Magnesium</keyword>
<keyword id="KW-0472">Membrane</keyword>
<keyword id="KW-0492">Microsome</keyword>
<keyword id="KW-0503">Monooxygenase</keyword>
<keyword id="KW-0521">NADP</keyword>
<keyword id="KW-0560">Oxidoreductase</keyword>
<keyword id="KW-1185">Reference proteome</keyword>
<keyword id="KW-0812">Transmembrane</keyword>
<keyword id="KW-1133">Transmembrane helix</keyword>
<keyword id="KW-0832">Ubl conjugation</keyword>
<dbReference type="EC" id="1.14.13.-" evidence="3"/>
<dbReference type="EMBL" id="BC070904">
    <property type="protein sequence ID" value="AAH70904.1"/>
    <property type="molecule type" value="mRNA"/>
</dbReference>
<dbReference type="RefSeq" id="NP_653338.2">
    <property type="nucleotide sequence ID" value="NM_144737.2"/>
</dbReference>
<dbReference type="SMR" id="Q6IRI9"/>
<dbReference type="FunCoup" id="Q6IRI9">
    <property type="interactions" value="88"/>
</dbReference>
<dbReference type="STRING" id="10116.ENSRNOP00000004762"/>
<dbReference type="PhosphoSitePlus" id="Q6IRI9"/>
<dbReference type="PaxDb" id="10116-ENSRNOP00000004762"/>
<dbReference type="GeneID" id="246245"/>
<dbReference type="KEGG" id="rno:246245"/>
<dbReference type="UCSC" id="RGD:628600">
    <property type="organism name" value="rat"/>
</dbReference>
<dbReference type="AGR" id="RGD:628600"/>
<dbReference type="CTD" id="2327"/>
<dbReference type="RGD" id="628600">
    <property type="gene designation" value="Fmo2"/>
</dbReference>
<dbReference type="eggNOG" id="KOG1399">
    <property type="taxonomic scope" value="Eukaryota"/>
</dbReference>
<dbReference type="InParanoid" id="Q6IRI9"/>
<dbReference type="OrthoDB" id="42764at9989"/>
<dbReference type="PhylomeDB" id="Q6IRI9"/>
<dbReference type="Reactome" id="R-RNO-217271">
    <property type="pathway name" value="FMO oxidises nucleophiles"/>
</dbReference>
<dbReference type="SABIO-RK" id="Q6IRI9"/>
<dbReference type="PRO" id="PR:Q6IRI9"/>
<dbReference type="Proteomes" id="UP000002494">
    <property type="component" value="Unplaced"/>
</dbReference>
<dbReference type="GO" id="GO:0005789">
    <property type="term" value="C:endoplasmic reticulum membrane"/>
    <property type="evidence" value="ECO:0007669"/>
    <property type="project" value="UniProtKB-SubCell"/>
</dbReference>
<dbReference type="GO" id="GO:0016020">
    <property type="term" value="C:membrane"/>
    <property type="evidence" value="ECO:0000250"/>
    <property type="project" value="UniProtKB"/>
</dbReference>
<dbReference type="GO" id="GO:0050660">
    <property type="term" value="F:flavin adenine dinucleotide binding"/>
    <property type="evidence" value="ECO:0007669"/>
    <property type="project" value="InterPro"/>
</dbReference>
<dbReference type="GO" id="GO:0004497">
    <property type="term" value="F:monooxygenase activity"/>
    <property type="evidence" value="ECO:0000266"/>
    <property type="project" value="RGD"/>
</dbReference>
<dbReference type="GO" id="GO:0004499">
    <property type="term" value="F:N,N-dimethylaniline monooxygenase activity"/>
    <property type="evidence" value="ECO:0000266"/>
    <property type="project" value="RGD"/>
</dbReference>
<dbReference type="GO" id="GO:0050661">
    <property type="term" value="F:NADP binding"/>
    <property type="evidence" value="ECO:0007669"/>
    <property type="project" value="InterPro"/>
</dbReference>
<dbReference type="GO" id="GO:0097009">
    <property type="term" value="P:energy homeostasis"/>
    <property type="evidence" value="ECO:0000266"/>
    <property type="project" value="RGD"/>
</dbReference>
<dbReference type="GO" id="GO:0006739">
    <property type="term" value="P:NADP metabolic process"/>
    <property type="evidence" value="ECO:0000266"/>
    <property type="project" value="RGD"/>
</dbReference>
<dbReference type="GO" id="GO:0046322">
    <property type="term" value="P:negative regulation of fatty acid oxidation"/>
    <property type="evidence" value="ECO:0000266"/>
    <property type="project" value="RGD"/>
</dbReference>
<dbReference type="GO" id="GO:0006082">
    <property type="term" value="P:organic acid metabolic process"/>
    <property type="evidence" value="ECO:0000266"/>
    <property type="project" value="RGD"/>
</dbReference>
<dbReference type="GO" id="GO:0072592">
    <property type="term" value="P:oxygen metabolic process"/>
    <property type="evidence" value="ECO:0000266"/>
    <property type="project" value="RGD"/>
</dbReference>
<dbReference type="GO" id="GO:0009404">
    <property type="term" value="P:toxin metabolic process"/>
    <property type="evidence" value="ECO:0000266"/>
    <property type="project" value="RGD"/>
</dbReference>
<dbReference type="GO" id="GO:0006805">
    <property type="term" value="P:xenobiotic metabolic process"/>
    <property type="evidence" value="ECO:0000266"/>
    <property type="project" value="RGD"/>
</dbReference>
<dbReference type="FunFam" id="3.50.50.60:FF:000042">
    <property type="entry name" value="Dimethylaniline monooxygenase [N-oxide-forming]"/>
    <property type="match status" value="1"/>
</dbReference>
<dbReference type="FunFam" id="3.50.50.60:FF:000073">
    <property type="entry name" value="Dimethylaniline monooxygenase [N-oxide-forming]"/>
    <property type="match status" value="1"/>
</dbReference>
<dbReference type="FunFam" id="3.50.50.60:FF:000409">
    <property type="entry name" value="Dimethylaniline monooxygenase [N-oxide-forming]"/>
    <property type="match status" value="1"/>
</dbReference>
<dbReference type="Gene3D" id="3.50.50.60">
    <property type="entry name" value="FAD/NAD(P)-binding domain"/>
    <property type="match status" value="2"/>
</dbReference>
<dbReference type="InterPro" id="IPR036188">
    <property type="entry name" value="FAD/NAD-bd_sf"/>
</dbReference>
<dbReference type="InterPro" id="IPR000960">
    <property type="entry name" value="Flavin_mOase"/>
</dbReference>
<dbReference type="InterPro" id="IPR020946">
    <property type="entry name" value="Flavin_mOase-like"/>
</dbReference>
<dbReference type="InterPro" id="IPR002254">
    <property type="entry name" value="Flavin_mOase_2"/>
</dbReference>
<dbReference type="InterPro" id="IPR050346">
    <property type="entry name" value="FMO-like"/>
</dbReference>
<dbReference type="PANTHER" id="PTHR23023">
    <property type="entry name" value="DIMETHYLANILINE MONOOXYGENASE"/>
    <property type="match status" value="1"/>
</dbReference>
<dbReference type="Pfam" id="PF00743">
    <property type="entry name" value="FMO-like"/>
    <property type="match status" value="1"/>
</dbReference>
<dbReference type="PIRSF" id="PIRSF000332">
    <property type="entry name" value="FMO"/>
    <property type="match status" value="1"/>
</dbReference>
<dbReference type="PRINTS" id="PR00370">
    <property type="entry name" value="FMOXYGENASE"/>
</dbReference>
<dbReference type="PRINTS" id="PR01122">
    <property type="entry name" value="FMOXYGENASE2"/>
</dbReference>
<dbReference type="SUPFAM" id="SSF51905">
    <property type="entry name" value="FAD/NAD(P)-binding domain"/>
    <property type="match status" value="2"/>
</dbReference>